<proteinExistence type="predicted"/>
<organism>
    <name type="scientific">Agrobacterium tumefaciens (strain T37)</name>
    <dbReference type="NCBI Taxonomy" id="176300"/>
    <lineage>
        <taxon>Bacteria</taxon>
        <taxon>Pseudomonadati</taxon>
        <taxon>Pseudomonadota</taxon>
        <taxon>Alphaproteobacteria</taxon>
        <taxon>Hyphomicrobiales</taxon>
        <taxon>Rhizobiaceae</taxon>
        <taxon>Rhizobium/Agrobacterium group</taxon>
        <taxon>Agrobacterium</taxon>
        <taxon>Agrobacterium tumefaciens complex</taxon>
    </lineage>
</organism>
<reference key="1">
    <citation type="journal article" date="1986" name="Nucleic Acids Res.">
        <title>Nucleotide sequence of an insertion sequence (IS) element identified in the T-DNA region of a spontaneous variant of the Ti-plasmid pTiT37.</title>
        <authorList>
            <person name="Vanderleyden J."/>
            <person name="Desair J."/>
            <person name="de Meirsman C."/>
            <person name="Michiels K."/>
            <person name="van Gool A.P."/>
            <person name="Chilton M.-D."/>
            <person name="Jen G.C."/>
        </authorList>
    </citation>
    <scope>NUCLEOTIDE SEQUENCE [GENOMIC DNA]</scope>
    <source>
        <strain>A208</strain>
    </source>
</reference>
<sequence length="194" mass="21239">MAGRSSASSALLYGPRGFDLPFSRSMRLERETPSVSATAFIANRPSATRSAAISVFLSPLWKGLRGGFRPPSSCDRACAPTPGRDPPVSSLPNSRQPARQNPRLQHLPRSRACATDKANWAPRMTASGRRYRLAGFKTLLNDCQLLLGCPPPARDITRQQFNVSIVVRHKPVLKPVLEPFCLCRLSGRNGGQFI</sequence>
<accession>P05679</accession>
<name>YI32_AGRT7</name>
<protein>
    <recommendedName>
        <fullName>Insertion element IS136 uncharacterized 21.2 kDa protein</fullName>
    </recommendedName>
</protein>
<feature type="chain" id="PRO_0000075514" description="Insertion element IS136 uncharacterized 21.2 kDa protein">
    <location>
        <begin position="1"/>
        <end position="194"/>
    </location>
</feature>
<feature type="region of interest" description="Disordered" evidence="1">
    <location>
        <begin position="73"/>
        <end position="103"/>
    </location>
</feature>
<feature type="compositionally biased region" description="Polar residues" evidence="1">
    <location>
        <begin position="90"/>
        <end position="103"/>
    </location>
</feature>
<dbReference type="EMBL" id="X04282">
    <property type="protein sequence ID" value="CAA27830.1"/>
    <property type="molecule type" value="Genomic_DNA"/>
</dbReference>
<dbReference type="PIR" id="S07930">
    <property type="entry name" value="S07930"/>
</dbReference>
<geneLocation type="plasmid">
    <name>pTiT37</name>
</geneLocation>
<keyword id="KW-0614">Plasmid</keyword>
<keyword id="KW-0814">Transposable element</keyword>
<evidence type="ECO:0000256" key="1">
    <source>
        <dbReference type="SAM" id="MobiDB-lite"/>
    </source>
</evidence>